<organism>
    <name type="scientific">Ralstonia nicotianae (strain ATCC BAA-1114 / GMI1000)</name>
    <name type="common">Ralstonia solanacearum</name>
    <dbReference type="NCBI Taxonomy" id="267608"/>
    <lineage>
        <taxon>Bacteria</taxon>
        <taxon>Pseudomonadati</taxon>
        <taxon>Pseudomonadota</taxon>
        <taxon>Betaproteobacteria</taxon>
        <taxon>Burkholderiales</taxon>
        <taxon>Burkholderiaceae</taxon>
        <taxon>Ralstonia</taxon>
        <taxon>Ralstonia solanacearum species complex</taxon>
    </lineage>
</organism>
<gene>
    <name evidence="2" type="primary">purD</name>
    <name type="ordered locus">RSc2191</name>
    <name type="ORF">RS01408</name>
</gene>
<evidence type="ECO:0000250" key="1"/>
<evidence type="ECO:0000255" key="2">
    <source>
        <dbReference type="HAMAP-Rule" id="MF_00138"/>
    </source>
</evidence>
<dbReference type="EC" id="6.3.4.13" evidence="2"/>
<dbReference type="EMBL" id="AL646052">
    <property type="protein sequence ID" value="CAD15898.1"/>
    <property type="molecule type" value="Genomic_DNA"/>
</dbReference>
<dbReference type="RefSeq" id="WP_011002119.1">
    <property type="nucleotide sequence ID" value="NC_003295.1"/>
</dbReference>
<dbReference type="SMR" id="Q8XXC4"/>
<dbReference type="STRING" id="267608.RSc2191"/>
<dbReference type="EnsemblBacteria" id="CAD15898">
    <property type="protein sequence ID" value="CAD15898"/>
    <property type="gene ID" value="RSc2191"/>
</dbReference>
<dbReference type="KEGG" id="rso:RSc2191"/>
<dbReference type="eggNOG" id="COG0151">
    <property type="taxonomic scope" value="Bacteria"/>
</dbReference>
<dbReference type="HOGENOM" id="CLU_027420_3_1_4"/>
<dbReference type="UniPathway" id="UPA00074">
    <property type="reaction ID" value="UER00125"/>
</dbReference>
<dbReference type="Proteomes" id="UP000001436">
    <property type="component" value="Chromosome"/>
</dbReference>
<dbReference type="GO" id="GO:0005524">
    <property type="term" value="F:ATP binding"/>
    <property type="evidence" value="ECO:0007669"/>
    <property type="project" value="UniProtKB-KW"/>
</dbReference>
<dbReference type="GO" id="GO:0046872">
    <property type="term" value="F:metal ion binding"/>
    <property type="evidence" value="ECO:0007669"/>
    <property type="project" value="UniProtKB-KW"/>
</dbReference>
<dbReference type="GO" id="GO:0004637">
    <property type="term" value="F:phosphoribosylamine-glycine ligase activity"/>
    <property type="evidence" value="ECO:0007669"/>
    <property type="project" value="UniProtKB-UniRule"/>
</dbReference>
<dbReference type="GO" id="GO:0006189">
    <property type="term" value="P:'de novo' IMP biosynthetic process"/>
    <property type="evidence" value="ECO:0007669"/>
    <property type="project" value="UniProtKB-UniRule"/>
</dbReference>
<dbReference type="GO" id="GO:0009113">
    <property type="term" value="P:purine nucleobase biosynthetic process"/>
    <property type="evidence" value="ECO:0007669"/>
    <property type="project" value="InterPro"/>
</dbReference>
<dbReference type="FunFam" id="3.30.470.20:FF:000031">
    <property type="entry name" value="Phosphoribosylamine--glycine ligase"/>
    <property type="match status" value="1"/>
</dbReference>
<dbReference type="FunFam" id="3.40.50.20:FF:000006">
    <property type="entry name" value="Phosphoribosylamine--glycine ligase, chloroplastic"/>
    <property type="match status" value="1"/>
</dbReference>
<dbReference type="FunFam" id="3.30.1490.20:FF:000006">
    <property type="entry name" value="phosphoribosylamine--glycine ligase, chloroplastic-like"/>
    <property type="match status" value="1"/>
</dbReference>
<dbReference type="FunFam" id="3.90.600.10:FF:000001">
    <property type="entry name" value="Trifunctional purine biosynthetic protein adenosine-3"/>
    <property type="match status" value="1"/>
</dbReference>
<dbReference type="Gene3D" id="3.40.50.20">
    <property type="match status" value="1"/>
</dbReference>
<dbReference type="Gene3D" id="3.30.1490.20">
    <property type="entry name" value="ATP-grasp fold, A domain"/>
    <property type="match status" value="1"/>
</dbReference>
<dbReference type="Gene3D" id="3.30.470.20">
    <property type="entry name" value="ATP-grasp fold, B domain"/>
    <property type="match status" value="1"/>
</dbReference>
<dbReference type="Gene3D" id="3.90.600.10">
    <property type="entry name" value="Phosphoribosylglycinamide synthetase, C-terminal domain"/>
    <property type="match status" value="1"/>
</dbReference>
<dbReference type="HAMAP" id="MF_00138">
    <property type="entry name" value="GARS"/>
    <property type="match status" value="1"/>
</dbReference>
<dbReference type="InterPro" id="IPR011761">
    <property type="entry name" value="ATP-grasp"/>
</dbReference>
<dbReference type="InterPro" id="IPR013815">
    <property type="entry name" value="ATP_grasp_subdomain_1"/>
</dbReference>
<dbReference type="InterPro" id="IPR016185">
    <property type="entry name" value="PreATP-grasp_dom_sf"/>
</dbReference>
<dbReference type="InterPro" id="IPR020561">
    <property type="entry name" value="PRibGlycinamid_synth_ATP-grasp"/>
</dbReference>
<dbReference type="InterPro" id="IPR000115">
    <property type="entry name" value="PRibGlycinamide_synth"/>
</dbReference>
<dbReference type="InterPro" id="IPR020560">
    <property type="entry name" value="PRibGlycinamide_synth_C-dom"/>
</dbReference>
<dbReference type="InterPro" id="IPR037123">
    <property type="entry name" value="PRibGlycinamide_synth_C_sf"/>
</dbReference>
<dbReference type="InterPro" id="IPR020562">
    <property type="entry name" value="PRibGlycinamide_synth_N"/>
</dbReference>
<dbReference type="InterPro" id="IPR011054">
    <property type="entry name" value="Rudment_hybrid_motif"/>
</dbReference>
<dbReference type="NCBIfam" id="TIGR00877">
    <property type="entry name" value="purD"/>
    <property type="match status" value="1"/>
</dbReference>
<dbReference type="PANTHER" id="PTHR43472">
    <property type="entry name" value="PHOSPHORIBOSYLAMINE--GLYCINE LIGASE"/>
    <property type="match status" value="1"/>
</dbReference>
<dbReference type="PANTHER" id="PTHR43472:SF1">
    <property type="entry name" value="PHOSPHORIBOSYLAMINE--GLYCINE LIGASE, CHLOROPLASTIC"/>
    <property type="match status" value="1"/>
</dbReference>
<dbReference type="Pfam" id="PF01071">
    <property type="entry name" value="GARS_A"/>
    <property type="match status" value="1"/>
</dbReference>
<dbReference type="Pfam" id="PF02843">
    <property type="entry name" value="GARS_C"/>
    <property type="match status" value="1"/>
</dbReference>
<dbReference type="Pfam" id="PF02844">
    <property type="entry name" value="GARS_N"/>
    <property type="match status" value="1"/>
</dbReference>
<dbReference type="SMART" id="SM01209">
    <property type="entry name" value="GARS_A"/>
    <property type="match status" value="1"/>
</dbReference>
<dbReference type="SMART" id="SM01210">
    <property type="entry name" value="GARS_C"/>
    <property type="match status" value="1"/>
</dbReference>
<dbReference type="SUPFAM" id="SSF56059">
    <property type="entry name" value="Glutathione synthetase ATP-binding domain-like"/>
    <property type="match status" value="1"/>
</dbReference>
<dbReference type="SUPFAM" id="SSF52440">
    <property type="entry name" value="PreATP-grasp domain"/>
    <property type="match status" value="1"/>
</dbReference>
<dbReference type="SUPFAM" id="SSF51246">
    <property type="entry name" value="Rudiment single hybrid motif"/>
    <property type="match status" value="1"/>
</dbReference>
<dbReference type="PROSITE" id="PS50975">
    <property type="entry name" value="ATP_GRASP"/>
    <property type="match status" value="1"/>
</dbReference>
<protein>
    <recommendedName>
        <fullName evidence="2">Phosphoribosylamine--glycine ligase</fullName>
        <ecNumber evidence="2">6.3.4.13</ecNumber>
    </recommendedName>
    <alternativeName>
        <fullName evidence="2">GARS</fullName>
    </alternativeName>
    <alternativeName>
        <fullName evidence="2">Glycinamide ribonucleotide synthetase</fullName>
    </alternativeName>
    <alternativeName>
        <fullName evidence="2">Phosphoribosylglycinamide synthetase</fullName>
    </alternativeName>
</protein>
<accession>Q8XXC4</accession>
<keyword id="KW-0067">ATP-binding</keyword>
<keyword id="KW-0436">Ligase</keyword>
<keyword id="KW-0460">Magnesium</keyword>
<keyword id="KW-0464">Manganese</keyword>
<keyword id="KW-0479">Metal-binding</keyword>
<keyword id="KW-0547">Nucleotide-binding</keyword>
<keyword id="KW-0658">Purine biosynthesis</keyword>
<keyword id="KW-1185">Reference proteome</keyword>
<sequence>MKVMVVGSGGREHALAWKLARSPKVQVVYVAPGNGGTALDKRLQNVPITDPEVLAAFAEREGVHFTVVGPEAPLAAGIVDLFRAKGLRIFGPTRAAAQLESSKDFAKAFMQRHGIPTAKYQTFGNAAEAHAYVDREGAPIVIKADGLAAGKGVVVAMTLEEAHGAIDMMLADNRLGDAGARVVIEEFLAGEEASFIVVCDGKDVVAMATSQDHKRLLDGDAGPNTGGMGAYSPAPVVTPTLHARVLREIILPTIRGMEKDGIPYTGFLYAGLMIDADGTPKTLEFNCRMGDPETQPIMARMKTDLFDVLDRAIDGKLDGMELDWDRRTALGVVMAAYNYPDTPRKGDVITGIPKETEDSVTFHAGTTLKDGALTTSGGRVLCVVGLADTVKAAQRAAYGAVEQIQFDGAQYRKDIGHRAIRR</sequence>
<name>PUR2_RALN1</name>
<reference key="1">
    <citation type="journal article" date="2002" name="Nature">
        <title>Genome sequence of the plant pathogen Ralstonia solanacearum.</title>
        <authorList>
            <person name="Salanoubat M."/>
            <person name="Genin S."/>
            <person name="Artiguenave F."/>
            <person name="Gouzy J."/>
            <person name="Mangenot S."/>
            <person name="Arlat M."/>
            <person name="Billault A."/>
            <person name="Brottier P."/>
            <person name="Camus J.-C."/>
            <person name="Cattolico L."/>
            <person name="Chandler M."/>
            <person name="Choisne N."/>
            <person name="Claudel-Renard C."/>
            <person name="Cunnac S."/>
            <person name="Demange N."/>
            <person name="Gaspin C."/>
            <person name="Lavie M."/>
            <person name="Moisan A."/>
            <person name="Robert C."/>
            <person name="Saurin W."/>
            <person name="Schiex T."/>
            <person name="Siguier P."/>
            <person name="Thebault P."/>
            <person name="Whalen M."/>
            <person name="Wincker P."/>
            <person name="Levy M."/>
            <person name="Weissenbach J."/>
            <person name="Boucher C.A."/>
        </authorList>
    </citation>
    <scope>NUCLEOTIDE SEQUENCE [LARGE SCALE GENOMIC DNA]</scope>
    <source>
        <strain>ATCC BAA-1114 / GMI1000</strain>
    </source>
</reference>
<feature type="chain" id="PRO_0000151472" description="Phosphoribosylamine--glycine ligase">
    <location>
        <begin position="1"/>
        <end position="422"/>
    </location>
</feature>
<feature type="domain" description="ATP-grasp" evidence="2">
    <location>
        <begin position="107"/>
        <end position="314"/>
    </location>
</feature>
<feature type="binding site" evidence="2">
    <location>
        <begin position="133"/>
        <end position="194"/>
    </location>
    <ligand>
        <name>ATP</name>
        <dbReference type="ChEBI" id="CHEBI:30616"/>
    </ligand>
</feature>
<feature type="binding site" evidence="2">
    <location>
        <position position="284"/>
    </location>
    <ligand>
        <name>Mg(2+)</name>
        <dbReference type="ChEBI" id="CHEBI:18420"/>
    </ligand>
</feature>
<feature type="binding site" evidence="2">
    <location>
        <position position="286"/>
    </location>
    <ligand>
        <name>Mg(2+)</name>
        <dbReference type="ChEBI" id="CHEBI:18420"/>
    </ligand>
</feature>
<proteinExistence type="inferred from homology"/>
<comment type="catalytic activity">
    <reaction evidence="2">
        <text>5-phospho-beta-D-ribosylamine + glycine + ATP = N(1)-(5-phospho-beta-D-ribosyl)glycinamide + ADP + phosphate + H(+)</text>
        <dbReference type="Rhea" id="RHEA:17453"/>
        <dbReference type="ChEBI" id="CHEBI:15378"/>
        <dbReference type="ChEBI" id="CHEBI:30616"/>
        <dbReference type="ChEBI" id="CHEBI:43474"/>
        <dbReference type="ChEBI" id="CHEBI:57305"/>
        <dbReference type="ChEBI" id="CHEBI:58681"/>
        <dbReference type="ChEBI" id="CHEBI:143788"/>
        <dbReference type="ChEBI" id="CHEBI:456216"/>
        <dbReference type="EC" id="6.3.4.13"/>
    </reaction>
</comment>
<comment type="cofactor">
    <cofactor evidence="1">
        <name>Mg(2+)</name>
        <dbReference type="ChEBI" id="CHEBI:18420"/>
    </cofactor>
    <cofactor evidence="1">
        <name>Mn(2+)</name>
        <dbReference type="ChEBI" id="CHEBI:29035"/>
    </cofactor>
    <text evidence="1">Binds 1 Mg(2+) or Mn(2+) ion per subunit.</text>
</comment>
<comment type="pathway">
    <text evidence="2">Purine metabolism; IMP biosynthesis via de novo pathway; N(1)-(5-phospho-D-ribosyl)glycinamide from 5-phospho-alpha-D-ribose 1-diphosphate: step 2/2.</text>
</comment>
<comment type="similarity">
    <text evidence="2">Belongs to the GARS family.</text>
</comment>